<comment type="function">
    <text evidence="1">This protein is located at the 30S-50S ribosomal subunit interface and may play a role in the structure and function of the aminoacyl-tRNA binding site.</text>
</comment>
<comment type="similarity">
    <text evidence="1">Belongs to the bacterial ribosomal protein bL19 family.</text>
</comment>
<comment type="sequence caution" evidence="2">
    <conflict type="erroneous initiation">
        <sequence resource="EMBL-CDS" id="AAW74582"/>
    </conflict>
</comment>
<dbReference type="EMBL" id="AE013598">
    <property type="protein sequence ID" value="AAW74582.1"/>
    <property type="status" value="ALT_INIT"/>
    <property type="molecule type" value="Genomic_DNA"/>
</dbReference>
<dbReference type="SMR" id="Q5H389"/>
<dbReference type="STRING" id="291331.XOO1328"/>
<dbReference type="KEGG" id="xoo:XOO1328"/>
<dbReference type="HOGENOM" id="CLU_103507_1_0_6"/>
<dbReference type="Proteomes" id="UP000006735">
    <property type="component" value="Chromosome"/>
</dbReference>
<dbReference type="GO" id="GO:0022625">
    <property type="term" value="C:cytosolic large ribosomal subunit"/>
    <property type="evidence" value="ECO:0007669"/>
    <property type="project" value="TreeGrafter"/>
</dbReference>
<dbReference type="GO" id="GO:0003735">
    <property type="term" value="F:structural constituent of ribosome"/>
    <property type="evidence" value="ECO:0007669"/>
    <property type="project" value="InterPro"/>
</dbReference>
<dbReference type="GO" id="GO:0006412">
    <property type="term" value="P:translation"/>
    <property type="evidence" value="ECO:0007669"/>
    <property type="project" value="UniProtKB-UniRule"/>
</dbReference>
<dbReference type="FunFam" id="2.30.30.790:FF:000001">
    <property type="entry name" value="50S ribosomal protein L19"/>
    <property type="match status" value="1"/>
</dbReference>
<dbReference type="Gene3D" id="2.30.30.790">
    <property type="match status" value="1"/>
</dbReference>
<dbReference type="HAMAP" id="MF_00402">
    <property type="entry name" value="Ribosomal_bL19"/>
    <property type="match status" value="1"/>
</dbReference>
<dbReference type="InterPro" id="IPR001857">
    <property type="entry name" value="Ribosomal_bL19"/>
</dbReference>
<dbReference type="InterPro" id="IPR018257">
    <property type="entry name" value="Ribosomal_bL19_CS"/>
</dbReference>
<dbReference type="InterPro" id="IPR038657">
    <property type="entry name" value="Ribosomal_bL19_sf"/>
</dbReference>
<dbReference type="InterPro" id="IPR008991">
    <property type="entry name" value="Translation_prot_SH3-like_sf"/>
</dbReference>
<dbReference type="NCBIfam" id="TIGR01024">
    <property type="entry name" value="rplS_bact"/>
    <property type="match status" value="1"/>
</dbReference>
<dbReference type="PANTHER" id="PTHR15680:SF9">
    <property type="entry name" value="LARGE RIBOSOMAL SUBUNIT PROTEIN BL19M"/>
    <property type="match status" value="1"/>
</dbReference>
<dbReference type="PANTHER" id="PTHR15680">
    <property type="entry name" value="RIBOSOMAL PROTEIN L19"/>
    <property type="match status" value="1"/>
</dbReference>
<dbReference type="Pfam" id="PF01245">
    <property type="entry name" value="Ribosomal_L19"/>
    <property type="match status" value="1"/>
</dbReference>
<dbReference type="PIRSF" id="PIRSF002191">
    <property type="entry name" value="Ribosomal_L19"/>
    <property type="match status" value="1"/>
</dbReference>
<dbReference type="PRINTS" id="PR00061">
    <property type="entry name" value="RIBOSOMALL19"/>
</dbReference>
<dbReference type="SUPFAM" id="SSF50104">
    <property type="entry name" value="Translation proteins SH3-like domain"/>
    <property type="match status" value="1"/>
</dbReference>
<dbReference type="PROSITE" id="PS01015">
    <property type="entry name" value="RIBOSOMAL_L19"/>
    <property type="match status" value="1"/>
</dbReference>
<organism>
    <name type="scientific">Xanthomonas oryzae pv. oryzae (strain KACC10331 / KXO85)</name>
    <dbReference type="NCBI Taxonomy" id="291331"/>
    <lineage>
        <taxon>Bacteria</taxon>
        <taxon>Pseudomonadati</taxon>
        <taxon>Pseudomonadota</taxon>
        <taxon>Gammaproteobacteria</taxon>
        <taxon>Lysobacterales</taxon>
        <taxon>Lysobacteraceae</taxon>
        <taxon>Xanthomonas</taxon>
    </lineage>
</organism>
<reference key="1">
    <citation type="journal article" date="2005" name="Nucleic Acids Res.">
        <title>The genome sequence of Xanthomonas oryzae pathovar oryzae KACC10331, the bacterial blight pathogen of rice.</title>
        <authorList>
            <person name="Lee B.-M."/>
            <person name="Park Y.-J."/>
            <person name="Park D.-S."/>
            <person name="Kang H.-W."/>
            <person name="Kim J.-G."/>
            <person name="Song E.-S."/>
            <person name="Park I.-C."/>
            <person name="Yoon U.-H."/>
            <person name="Hahn J.-H."/>
            <person name="Koo B.-S."/>
            <person name="Lee G.-B."/>
            <person name="Kim H."/>
            <person name="Park H.-S."/>
            <person name="Yoon K.-O."/>
            <person name="Kim J.-H."/>
            <person name="Jung C.-H."/>
            <person name="Koh N.-H."/>
            <person name="Seo J.-S."/>
            <person name="Go S.-J."/>
        </authorList>
    </citation>
    <scope>NUCLEOTIDE SEQUENCE [LARGE SCALE GENOMIC DNA]</scope>
    <source>
        <strain>KACC10331 / KXO85</strain>
    </source>
</reference>
<feature type="chain" id="PRO_0000226885" description="Large ribosomal subunit protein bL19">
    <location>
        <begin position="1"/>
        <end position="135"/>
    </location>
</feature>
<gene>
    <name evidence="1" type="primary">rplS</name>
    <name type="ordered locus">XOO1328</name>
</gene>
<evidence type="ECO:0000255" key="1">
    <source>
        <dbReference type="HAMAP-Rule" id="MF_00402"/>
    </source>
</evidence>
<evidence type="ECO:0000305" key="2"/>
<sequence>MSKLNKTILADFEAAQIQRKLPEFNQGDTVVVNVKVKEGNRERVQAYEGVVIGTKNAGLNSAFTVRKISHGFGVERVFQTHSAIIDSVEVKRRGKVRAGKLYYLRGLEGKAARIKEDLAAAAQAKAARQAAAKAE</sequence>
<keyword id="KW-1185">Reference proteome</keyword>
<keyword id="KW-0687">Ribonucleoprotein</keyword>
<keyword id="KW-0689">Ribosomal protein</keyword>
<name>RL19_XANOR</name>
<proteinExistence type="inferred from homology"/>
<protein>
    <recommendedName>
        <fullName evidence="1">Large ribosomal subunit protein bL19</fullName>
    </recommendedName>
    <alternativeName>
        <fullName evidence="2">50S ribosomal protein L19</fullName>
    </alternativeName>
</protein>
<accession>Q5H389</accession>